<keyword id="KW-0963">Cytoplasm</keyword>
<keyword id="KW-0489">Methyltransferase</keyword>
<keyword id="KW-0698">rRNA processing</keyword>
<keyword id="KW-0949">S-adenosyl-L-methionine</keyword>
<keyword id="KW-0808">Transferase</keyword>
<protein>
    <recommendedName>
        <fullName evidence="1">Ribosomal RNA small subunit methyltransferase H</fullName>
        <ecNumber evidence="1">2.1.1.199</ecNumber>
    </recommendedName>
    <alternativeName>
        <fullName evidence="1">16S rRNA m(4)C1402 methyltransferase</fullName>
    </alternativeName>
    <alternativeName>
        <fullName evidence="1">rRNA (cytosine-N(4)-)-methyltransferase RsmH</fullName>
    </alternativeName>
</protein>
<comment type="function">
    <text evidence="1">Specifically methylates the N4 position of cytidine in position 1402 (C1402) of 16S rRNA.</text>
</comment>
<comment type="catalytic activity">
    <reaction evidence="1">
        <text>cytidine(1402) in 16S rRNA + S-adenosyl-L-methionine = N(4)-methylcytidine(1402) in 16S rRNA + S-adenosyl-L-homocysteine + H(+)</text>
        <dbReference type="Rhea" id="RHEA:42928"/>
        <dbReference type="Rhea" id="RHEA-COMP:10286"/>
        <dbReference type="Rhea" id="RHEA-COMP:10287"/>
        <dbReference type="ChEBI" id="CHEBI:15378"/>
        <dbReference type="ChEBI" id="CHEBI:57856"/>
        <dbReference type="ChEBI" id="CHEBI:59789"/>
        <dbReference type="ChEBI" id="CHEBI:74506"/>
        <dbReference type="ChEBI" id="CHEBI:82748"/>
        <dbReference type="EC" id="2.1.1.199"/>
    </reaction>
</comment>
<comment type="subcellular location">
    <subcellularLocation>
        <location evidence="1">Cytoplasm</location>
    </subcellularLocation>
</comment>
<comment type="similarity">
    <text evidence="1">Belongs to the methyltransferase superfamily. RsmH family.</text>
</comment>
<name>RSMH_THENN</name>
<proteinExistence type="inferred from homology"/>
<feature type="chain" id="PRO_0000387194" description="Ribosomal RNA small subunit methyltransferase H">
    <location>
        <begin position="1"/>
        <end position="300"/>
    </location>
</feature>
<feature type="binding site" evidence="1">
    <location>
        <begin position="36"/>
        <end position="38"/>
    </location>
    <ligand>
        <name>S-adenosyl-L-methionine</name>
        <dbReference type="ChEBI" id="CHEBI:59789"/>
    </ligand>
</feature>
<feature type="binding site" evidence="1">
    <location>
        <position position="55"/>
    </location>
    <ligand>
        <name>S-adenosyl-L-methionine</name>
        <dbReference type="ChEBI" id="CHEBI:59789"/>
    </ligand>
</feature>
<feature type="binding site" evidence="1">
    <location>
        <position position="89"/>
    </location>
    <ligand>
        <name>S-adenosyl-L-methionine</name>
        <dbReference type="ChEBI" id="CHEBI:59789"/>
    </ligand>
</feature>
<feature type="binding site" evidence="1">
    <location>
        <position position="103"/>
    </location>
    <ligand>
        <name>S-adenosyl-L-methionine</name>
        <dbReference type="ChEBI" id="CHEBI:59789"/>
    </ligand>
</feature>
<feature type="binding site" evidence="1">
    <location>
        <position position="110"/>
    </location>
    <ligand>
        <name>S-adenosyl-L-methionine</name>
        <dbReference type="ChEBI" id="CHEBI:59789"/>
    </ligand>
</feature>
<evidence type="ECO:0000255" key="1">
    <source>
        <dbReference type="HAMAP-Rule" id="MF_01007"/>
    </source>
</evidence>
<reference key="1">
    <citation type="submission" date="2007-11" db="EMBL/GenBank/DDBJ databases">
        <title>The genome sequence of the hyperthermophilic bacterium Thermotoga neapolitana.</title>
        <authorList>
            <person name="Lim S.K."/>
            <person name="Kim J.S."/>
            <person name="Cha S.H."/>
            <person name="Park B.C."/>
            <person name="Lee D.S."/>
            <person name="Tae H.S."/>
            <person name="Kim S.-J."/>
            <person name="Kim J.J."/>
            <person name="Park K.J."/>
            <person name="Lee S.Y."/>
        </authorList>
    </citation>
    <scope>NUCLEOTIDE SEQUENCE [LARGE SCALE GENOMIC DNA]</scope>
    <source>
        <strain>ATCC 49049 / DSM 4359 / NBRC 107923 / NS-E</strain>
    </source>
</reference>
<dbReference type="EC" id="2.1.1.199" evidence="1"/>
<dbReference type="EMBL" id="CP000916">
    <property type="protein sequence ID" value="ACM23879.1"/>
    <property type="molecule type" value="Genomic_DNA"/>
</dbReference>
<dbReference type="RefSeq" id="WP_015920117.1">
    <property type="nucleotide sequence ID" value="NC_011978.1"/>
</dbReference>
<dbReference type="SMR" id="B9KA96"/>
<dbReference type="STRING" id="309803.CTN_1703"/>
<dbReference type="KEGG" id="tna:CTN_1703"/>
<dbReference type="eggNOG" id="COG0275">
    <property type="taxonomic scope" value="Bacteria"/>
</dbReference>
<dbReference type="HOGENOM" id="CLU_038422_3_0_0"/>
<dbReference type="Proteomes" id="UP000000445">
    <property type="component" value="Chromosome"/>
</dbReference>
<dbReference type="GO" id="GO:0005737">
    <property type="term" value="C:cytoplasm"/>
    <property type="evidence" value="ECO:0007669"/>
    <property type="project" value="UniProtKB-SubCell"/>
</dbReference>
<dbReference type="GO" id="GO:0071424">
    <property type="term" value="F:rRNA (cytosine-N4-)-methyltransferase activity"/>
    <property type="evidence" value="ECO:0007669"/>
    <property type="project" value="UniProtKB-UniRule"/>
</dbReference>
<dbReference type="GO" id="GO:0070475">
    <property type="term" value="P:rRNA base methylation"/>
    <property type="evidence" value="ECO:0007669"/>
    <property type="project" value="UniProtKB-UniRule"/>
</dbReference>
<dbReference type="CDD" id="cd02440">
    <property type="entry name" value="AdoMet_MTases"/>
    <property type="match status" value="1"/>
</dbReference>
<dbReference type="Gene3D" id="1.10.150.170">
    <property type="entry name" value="Putative methyltransferase TM0872, insert domain"/>
    <property type="match status" value="1"/>
</dbReference>
<dbReference type="Gene3D" id="3.40.50.150">
    <property type="entry name" value="Vaccinia Virus protein VP39"/>
    <property type="match status" value="1"/>
</dbReference>
<dbReference type="HAMAP" id="MF_01007">
    <property type="entry name" value="16SrRNA_methyltr_H"/>
    <property type="match status" value="1"/>
</dbReference>
<dbReference type="InterPro" id="IPR002903">
    <property type="entry name" value="RsmH"/>
</dbReference>
<dbReference type="InterPro" id="IPR023397">
    <property type="entry name" value="SAM-dep_MeTrfase_MraW_recog"/>
</dbReference>
<dbReference type="InterPro" id="IPR029063">
    <property type="entry name" value="SAM-dependent_MTases_sf"/>
</dbReference>
<dbReference type="NCBIfam" id="TIGR00006">
    <property type="entry name" value="16S rRNA (cytosine(1402)-N(4))-methyltransferase RsmH"/>
    <property type="match status" value="1"/>
</dbReference>
<dbReference type="PANTHER" id="PTHR11265:SF0">
    <property type="entry name" value="12S RRNA N4-METHYLCYTIDINE METHYLTRANSFERASE"/>
    <property type="match status" value="1"/>
</dbReference>
<dbReference type="PANTHER" id="PTHR11265">
    <property type="entry name" value="S-ADENOSYL-METHYLTRANSFERASE MRAW"/>
    <property type="match status" value="1"/>
</dbReference>
<dbReference type="Pfam" id="PF01795">
    <property type="entry name" value="Methyltransf_5"/>
    <property type="match status" value="1"/>
</dbReference>
<dbReference type="PIRSF" id="PIRSF004486">
    <property type="entry name" value="MraW"/>
    <property type="match status" value="1"/>
</dbReference>
<dbReference type="SUPFAM" id="SSF81799">
    <property type="entry name" value="Putative methyltransferase TM0872, insert domain"/>
    <property type="match status" value="1"/>
</dbReference>
<dbReference type="SUPFAM" id="SSF53335">
    <property type="entry name" value="S-adenosyl-L-methionine-dependent methyltransferases"/>
    <property type="match status" value="1"/>
</dbReference>
<sequence>MRKYTHYHIPVMVREVIEYLKPEDEKIILDCTVGEGGHARAILEHCPGCKLIGIDVDSEVLQIAEKKLKDFSDRVSLFKASYRDADFLLKTLEIEKVDGILLDLGVSTYQLKGENRGFTFEREEPLDMRMDLESEITAQKVLNELSEEELARIIFEYGEEKRYARRIARKIVENRPLNTTLDLVKAVSEALPSHEIRRRKRHFATRTFQAIRIYVNRELENLREFLLNKAEKLLRVGGRIVVISFHSLEDRIVKEAFRNSRKLRILTEKPVRPSEEEVRENPRSRSARLRAAELVEEGGD</sequence>
<gene>
    <name evidence="1" type="primary">rsmH</name>
    <name type="synonym">mraW</name>
    <name type="ordered locus">CTN_1703</name>
</gene>
<organism>
    <name type="scientific">Thermotoga neapolitana (strain ATCC 49049 / DSM 4359 / NBRC 107923 / NS-E)</name>
    <dbReference type="NCBI Taxonomy" id="309803"/>
    <lineage>
        <taxon>Bacteria</taxon>
        <taxon>Thermotogati</taxon>
        <taxon>Thermotogota</taxon>
        <taxon>Thermotogae</taxon>
        <taxon>Thermotogales</taxon>
        <taxon>Thermotogaceae</taxon>
        <taxon>Thermotoga</taxon>
    </lineage>
</organism>
<accession>B9KA96</accession>